<accession>Q6BXN8</accession>
<organism>
    <name type="scientific">Debaryomyces hansenii (strain ATCC 36239 / CBS 767 / BCRC 21394 / JCM 1990 / NBRC 0083 / IGC 2968)</name>
    <name type="common">Yeast</name>
    <name type="synonym">Torulaspora hansenii</name>
    <dbReference type="NCBI Taxonomy" id="284592"/>
    <lineage>
        <taxon>Eukaryota</taxon>
        <taxon>Fungi</taxon>
        <taxon>Dikarya</taxon>
        <taxon>Ascomycota</taxon>
        <taxon>Saccharomycotina</taxon>
        <taxon>Pichiomycetes</taxon>
        <taxon>Debaryomycetaceae</taxon>
        <taxon>Debaryomyces</taxon>
    </lineage>
</organism>
<gene>
    <name type="primary">ATP25</name>
    <name type="ordered locus">DEHA2B01496g</name>
</gene>
<name>ATP25_DEBHA</name>
<dbReference type="EMBL" id="CR382134">
    <property type="protein sequence ID" value="CAG85017.2"/>
    <property type="molecule type" value="Genomic_DNA"/>
</dbReference>
<dbReference type="RefSeq" id="XP_457031.2">
    <property type="nucleotide sequence ID" value="XM_457031.1"/>
</dbReference>
<dbReference type="SMR" id="Q6BXN8"/>
<dbReference type="FunCoup" id="Q6BXN8">
    <property type="interactions" value="84"/>
</dbReference>
<dbReference type="STRING" id="284592.Q6BXN8"/>
<dbReference type="GeneID" id="2913161"/>
<dbReference type="KEGG" id="dha:DEHA2B01496g"/>
<dbReference type="VEuPathDB" id="FungiDB:DEHA2B01496g"/>
<dbReference type="eggNOG" id="ENOG502RGZN">
    <property type="taxonomic scope" value="Eukaryota"/>
</dbReference>
<dbReference type="HOGENOM" id="CLU_454918_0_0_1"/>
<dbReference type="InParanoid" id="Q6BXN8"/>
<dbReference type="OMA" id="WLREQMM"/>
<dbReference type="OrthoDB" id="107372at2759"/>
<dbReference type="Proteomes" id="UP000000599">
    <property type="component" value="Chromosome B"/>
</dbReference>
<dbReference type="GO" id="GO:0005743">
    <property type="term" value="C:mitochondrial inner membrane"/>
    <property type="evidence" value="ECO:0007669"/>
    <property type="project" value="UniProtKB-SubCell"/>
</dbReference>
<dbReference type="GO" id="GO:0140053">
    <property type="term" value="P:mitochondrial gene expression"/>
    <property type="evidence" value="ECO:0007669"/>
    <property type="project" value="InterPro"/>
</dbReference>
<dbReference type="GO" id="GO:0048255">
    <property type="term" value="P:mRNA stabilization"/>
    <property type="evidence" value="ECO:0007669"/>
    <property type="project" value="TreeGrafter"/>
</dbReference>
<dbReference type="Gene3D" id="3.30.460.10">
    <property type="entry name" value="Beta Polymerase, domain 2"/>
    <property type="match status" value="1"/>
</dbReference>
<dbReference type="InterPro" id="IPR040152">
    <property type="entry name" value="Atp25"/>
</dbReference>
<dbReference type="InterPro" id="IPR043519">
    <property type="entry name" value="NT_sf"/>
</dbReference>
<dbReference type="PANTHER" id="PTHR28087">
    <property type="entry name" value="ATPASE SYNTHESIS PROTEIN 25, MITOCHONDRIAL"/>
    <property type="match status" value="1"/>
</dbReference>
<dbReference type="PANTHER" id="PTHR28087:SF1">
    <property type="entry name" value="ATPASE SYNTHESIS PROTEIN 25, MITOCHONDRIAL"/>
    <property type="match status" value="1"/>
</dbReference>
<dbReference type="Pfam" id="PF02410">
    <property type="entry name" value="RsfS"/>
    <property type="match status" value="1"/>
</dbReference>
<dbReference type="SUPFAM" id="SSF81301">
    <property type="entry name" value="Nucleotidyltransferase"/>
    <property type="match status" value="1"/>
</dbReference>
<keyword id="KW-0472">Membrane</keyword>
<keyword id="KW-0496">Mitochondrion</keyword>
<keyword id="KW-0999">Mitochondrion inner membrane</keyword>
<keyword id="KW-1185">Reference proteome</keyword>
<keyword id="KW-0809">Transit peptide</keyword>
<evidence type="ECO:0000250" key="1"/>
<evidence type="ECO:0000255" key="2"/>
<evidence type="ECO:0000305" key="3"/>
<protein>
    <recommendedName>
        <fullName>ATPase synthesis protein 25, mitochondrial</fullName>
    </recommendedName>
</protein>
<proteinExistence type="inferred from homology"/>
<sequence length="648" mass="75025">MANLLGYVGRRSAPYVVRRFIGANNYRYYSASQNLKSNLSEPVGEDPIEPTEQASKGNINEVQDGLSKAEMNAEESVPWYLRDDSSSPLLENKNVELPFVPDHAPSSVNTFLELLSNEYGLEDIELFDLTQLDPENEYHADNQPTDYMIICTGKSEKHIYKASNELRTYIKHNYNLIPKIEGMASNSKTPAARRRMLRRARKGPLATDNDYGRTPNSWVMCDTAVNNTCIHILTDSRRDELNLETLWCREEDIEKYSTPESATEESDDIFIGIRRFHTMTPFARRFQQMRSYSASQSNESLESYLHKLTGESLTVDSLRQHIKGFESDFQQPTIKDYNTRFNFYRSIHIQNSDVMSLEKLTSILLDKYSSLQIILSNSIDLSKERTQDMVDFMKLLIDSPEIKKHFDLSNSKQMNSYSDELYDKLAQFVSSLFQFSKEQIDMSRHPEFLPLLWRLSFVQKNDTVIGSRMIDDIIYQEGDLPDLPGQPSIFQAKNRARDTLDLINYYNQKIDENASTTNSFKELLLFTYGNAGDWAKFWNTWEISFNLLNNSKIDSKSSIKNWVRLVVYLAIRNDRSAIVHFLNNYWNHSTSIAGSFIDDFELNNNVFNSDEEKRSFKNSVYKMLNSMNNDNESNPSFSNVKEFVDNLD</sequence>
<comment type="function">
    <text evidence="1">Probable mitochondrial mRNA stabilization factor.</text>
</comment>
<comment type="subcellular location">
    <subcellularLocation>
        <location evidence="1">Mitochondrion inner membrane</location>
        <topology evidence="1">Peripheral membrane protein</topology>
        <orientation evidence="1">Matrix side</orientation>
    </subcellularLocation>
</comment>
<comment type="similarity">
    <text evidence="3">Belongs to the ATP25 family.</text>
</comment>
<feature type="transit peptide" description="Mitochondrion" evidence="2">
    <location>
        <begin position="1"/>
        <end position="29"/>
    </location>
</feature>
<feature type="chain" id="PRO_0000404470" description="ATPase synthesis protein 25, mitochondrial">
    <location>
        <begin position="30"/>
        <end position="648"/>
    </location>
</feature>
<reference key="1">
    <citation type="journal article" date="2004" name="Nature">
        <title>Genome evolution in yeasts.</title>
        <authorList>
            <person name="Dujon B."/>
            <person name="Sherman D."/>
            <person name="Fischer G."/>
            <person name="Durrens P."/>
            <person name="Casaregola S."/>
            <person name="Lafontaine I."/>
            <person name="de Montigny J."/>
            <person name="Marck C."/>
            <person name="Neuveglise C."/>
            <person name="Talla E."/>
            <person name="Goffard N."/>
            <person name="Frangeul L."/>
            <person name="Aigle M."/>
            <person name="Anthouard V."/>
            <person name="Babour A."/>
            <person name="Barbe V."/>
            <person name="Barnay S."/>
            <person name="Blanchin S."/>
            <person name="Beckerich J.-M."/>
            <person name="Beyne E."/>
            <person name="Bleykasten C."/>
            <person name="Boisrame A."/>
            <person name="Boyer J."/>
            <person name="Cattolico L."/>
            <person name="Confanioleri F."/>
            <person name="de Daruvar A."/>
            <person name="Despons L."/>
            <person name="Fabre E."/>
            <person name="Fairhead C."/>
            <person name="Ferry-Dumazet H."/>
            <person name="Groppi A."/>
            <person name="Hantraye F."/>
            <person name="Hennequin C."/>
            <person name="Jauniaux N."/>
            <person name="Joyet P."/>
            <person name="Kachouri R."/>
            <person name="Kerrest A."/>
            <person name="Koszul R."/>
            <person name="Lemaire M."/>
            <person name="Lesur I."/>
            <person name="Ma L."/>
            <person name="Muller H."/>
            <person name="Nicaud J.-M."/>
            <person name="Nikolski M."/>
            <person name="Oztas S."/>
            <person name="Ozier-Kalogeropoulos O."/>
            <person name="Pellenz S."/>
            <person name="Potier S."/>
            <person name="Richard G.-F."/>
            <person name="Straub M.-L."/>
            <person name="Suleau A."/>
            <person name="Swennen D."/>
            <person name="Tekaia F."/>
            <person name="Wesolowski-Louvel M."/>
            <person name="Westhof E."/>
            <person name="Wirth B."/>
            <person name="Zeniou-Meyer M."/>
            <person name="Zivanovic Y."/>
            <person name="Bolotin-Fukuhara M."/>
            <person name="Thierry A."/>
            <person name="Bouchier C."/>
            <person name="Caudron B."/>
            <person name="Scarpelli C."/>
            <person name="Gaillardin C."/>
            <person name="Weissenbach J."/>
            <person name="Wincker P."/>
            <person name="Souciet J.-L."/>
        </authorList>
    </citation>
    <scope>NUCLEOTIDE SEQUENCE [LARGE SCALE GENOMIC DNA]</scope>
    <source>
        <strain>ATCC 36239 / CBS 767 / BCRC 21394 / JCM 1990 / NBRC 0083 / IGC 2968</strain>
    </source>
</reference>